<proteinExistence type="evidence at transcript level"/>
<comment type="function">
    <text evidence="1">Tubulin-binding protein that acts as a negative regulator of Notch signaling pathway. Shuttles between the cytoplasm and the nucleus and mediates the nuclear export of RBPJ/RBPSUH, thereby preventing the interaction between RBPJ/RBPSUH and NICD product of Notch proteins (Notch intracellular domain), leading to down-regulate Notch-mediated transcription. May play a role in neurogenesis (By similarity).</text>
</comment>
<comment type="subunit">
    <text evidence="1">Interacts with RBPJ/RBPSUH.</text>
</comment>
<comment type="subcellular location">
    <subcellularLocation>
        <location evidence="1">Cytoplasm</location>
    </subcellularLocation>
    <subcellularLocation>
        <location evidence="1">Nucleus</location>
    </subcellularLocation>
    <subcellularLocation>
        <location evidence="1">Cytoplasm</location>
        <location evidence="1">Cytoskeleton</location>
        <location evidence="1">Microtubule organizing center</location>
        <location evidence="1">Centrosome</location>
    </subcellularLocation>
    <text evidence="1">Shuttles rapidly between the cytoplasm and the nucleus. The function of centrosome localization is still unclear (By similarity).</text>
</comment>
<comment type="similarity">
    <text evidence="3">Belongs to the RITA family.</text>
</comment>
<reference key="1">
    <citation type="journal article" date="2005" name="Science">
        <title>The transcriptional landscape of the mammalian genome.</title>
        <authorList>
            <person name="Carninci P."/>
            <person name="Kasukawa T."/>
            <person name="Katayama S."/>
            <person name="Gough J."/>
            <person name="Frith M.C."/>
            <person name="Maeda N."/>
            <person name="Oyama R."/>
            <person name="Ravasi T."/>
            <person name="Lenhard B."/>
            <person name="Wells C."/>
            <person name="Kodzius R."/>
            <person name="Shimokawa K."/>
            <person name="Bajic V.B."/>
            <person name="Brenner S.E."/>
            <person name="Batalov S."/>
            <person name="Forrest A.R."/>
            <person name="Zavolan M."/>
            <person name="Davis M.J."/>
            <person name="Wilming L.G."/>
            <person name="Aidinis V."/>
            <person name="Allen J.E."/>
            <person name="Ambesi-Impiombato A."/>
            <person name="Apweiler R."/>
            <person name="Aturaliya R.N."/>
            <person name="Bailey T.L."/>
            <person name="Bansal M."/>
            <person name="Baxter L."/>
            <person name="Beisel K.W."/>
            <person name="Bersano T."/>
            <person name="Bono H."/>
            <person name="Chalk A.M."/>
            <person name="Chiu K.P."/>
            <person name="Choudhary V."/>
            <person name="Christoffels A."/>
            <person name="Clutterbuck D.R."/>
            <person name="Crowe M.L."/>
            <person name="Dalla E."/>
            <person name="Dalrymple B.P."/>
            <person name="de Bono B."/>
            <person name="Della Gatta G."/>
            <person name="di Bernardo D."/>
            <person name="Down T."/>
            <person name="Engstrom P."/>
            <person name="Fagiolini M."/>
            <person name="Faulkner G."/>
            <person name="Fletcher C.F."/>
            <person name="Fukushima T."/>
            <person name="Furuno M."/>
            <person name="Futaki S."/>
            <person name="Gariboldi M."/>
            <person name="Georgii-Hemming P."/>
            <person name="Gingeras T.R."/>
            <person name="Gojobori T."/>
            <person name="Green R.E."/>
            <person name="Gustincich S."/>
            <person name="Harbers M."/>
            <person name="Hayashi Y."/>
            <person name="Hensch T.K."/>
            <person name="Hirokawa N."/>
            <person name="Hill D."/>
            <person name="Huminiecki L."/>
            <person name="Iacono M."/>
            <person name="Ikeo K."/>
            <person name="Iwama A."/>
            <person name="Ishikawa T."/>
            <person name="Jakt M."/>
            <person name="Kanapin A."/>
            <person name="Katoh M."/>
            <person name="Kawasawa Y."/>
            <person name="Kelso J."/>
            <person name="Kitamura H."/>
            <person name="Kitano H."/>
            <person name="Kollias G."/>
            <person name="Krishnan S.P."/>
            <person name="Kruger A."/>
            <person name="Kummerfeld S.K."/>
            <person name="Kurochkin I.V."/>
            <person name="Lareau L.F."/>
            <person name="Lazarevic D."/>
            <person name="Lipovich L."/>
            <person name="Liu J."/>
            <person name="Liuni S."/>
            <person name="McWilliam S."/>
            <person name="Madan Babu M."/>
            <person name="Madera M."/>
            <person name="Marchionni L."/>
            <person name="Matsuda H."/>
            <person name="Matsuzawa S."/>
            <person name="Miki H."/>
            <person name="Mignone F."/>
            <person name="Miyake S."/>
            <person name="Morris K."/>
            <person name="Mottagui-Tabar S."/>
            <person name="Mulder N."/>
            <person name="Nakano N."/>
            <person name="Nakauchi H."/>
            <person name="Ng P."/>
            <person name="Nilsson R."/>
            <person name="Nishiguchi S."/>
            <person name="Nishikawa S."/>
            <person name="Nori F."/>
            <person name="Ohara O."/>
            <person name="Okazaki Y."/>
            <person name="Orlando V."/>
            <person name="Pang K.C."/>
            <person name="Pavan W.J."/>
            <person name="Pavesi G."/>
            <person name="Pesole G."/>
            <person name="Petrovsky N."/>
            <person name="Piazza S."/>
            <person name="Reed J."/>
            <person name="Reid J.F."/>
            <person name="Ring B.Z."/>
            <person name="Ringwald M."/>
            <person name="Rost B."/>
            <person name="Ruan Y."/>
            <person name="Salzberg S.L."/>
            <person name="Sandelin A."/>
            <person name="Schneider C."/>
            <person name="Schoenbach C."/>
            <person name="Sekiguchi K."/>
            <person name="Semple C.A."/>
            <person name="Seno S."/>
            <person name="Sessa L."/>
            <person name="Sheng Y."/>
            <person name="Shibata Y."/>
            <person name="Shimada H."/>
            <person name="Shimada K."/>
            <person name="Silva D."/>
            <person name="Sinclair B."/>
            <person name="Sperling S."/>
            <person name="Stupka E."/>
            <person name="Sugiura K."/>
            <person name="Sultana R."/>
            <person name="Takenaka Y."/>
            <person name="Taki K."/>
            <person name="Tammoja K."/>
            <person name="Tan S.L."/>
            <person name="Tang S."/>
            <person name="Taylor M.S."/>
            <person name="Tegner J."/>
            <person name="Teichmann S.A."/>
            <person name="Ueda H.R."/>
            <person name="van Nimwegen E."/>
            <person name="Verardo R."/>
            <person name="Wei C.L."/>
            <person name="Yagi K."/>
            <person name="Yamanishi H."/>
            <person name="Zabarovsky E."/>
            <person name="Zhu S."/>
            <person name="Zimmer A."/>
            <person name="Hide W."/>
            <person name="Bult C."/>
            <person name="Grimmond S.M."/>
            <person name="Teasdale R.D."/>
            <person name="Liu E.T."/>
            <person name="Brusic V."/>
            <person name="Quackenbush J."/>
            <person name="Wahlestedt C."/>
            <person name="Mattick J.S."/>
            <person name="Hume D.A."/>
            <person name="Kai C."/>
            <person name="Sasaki D."/>
            <person name="Tomaru Y."/>
            <person name="Fukuda S."/>
            <person name="Kanamori-Katayama M."/>
            <person name="Suzuki M."/>
            <person name="Aoki J."/>
            <person name="Arakawa T."/>
            <person name="Iida J."/>
            <person name="Imamura K."/>
            <person name="Itoh M."/>
            <person name="Kato T."/>
            <person name="Kawaji H."/>
            <person name="Kawagashira N."/>
            <person name="Kawashima T."/>
            <person name="Kojima M."/>
            <person name="Kondo S."/>
            <person name="Konno H."/>
            <person name="Nakano K."/>
            <person name="Ninomiya N."/>
            <person name="Nishio T."/>
            <person name="Okada M."/>
            <person name="Plessy C."/>
            <person name="Shibata K."/>
            <person name="Shiraki T."/>
            <person name="Suzuki S."/>
            <person name="Tagami M."/>
            <person name="Waki K."/>
            <person name="Watahiki A."/>
            <person name="Okamura-Oho Y."/>
            <person name="Suzuki H."/>
            <person name="Kawai J."/>
            <person name="Hayashizaki Y."/>
        </authorList>
    </citation>
    <scope>NUCLEOTIDE SEQUENCE [LARGE SCALE MRNA]</scope>
    <source>
        <strain>C57BL/6J</strain>
        <tissue>Embryo</tissue>
    </source>
</reference>
<reference key="2">
    <citation type="journal article" date="2004" name="Genome Res.">
        <title>The status, quality, and expansion of the NIH full-length cDNA project: the Mammalian Gene Collection (MGC).</title>
        <authorList>
            <consortium name="The MGC Project Team"/>
        </authorList>
    </citation>
    <scope>NUCLEOTIDE SEQUENCE [LARGE SCALE MRNA]</scope>
    <source>
        <strain>FVB/N</strain>
        <tissue>Mammary tumor</tissue>
    </source>
</reference>
<keyword id="KW-0963">Cytoplasm</keyword>
<keyword id="KW-0206">Cytoskeleton</keyword>
<keyword id="KW-0524">Neurogenesis</keyword>
<keyword id="KW-0914">Notch signaling pathway</keyword>
<keyword id="KW-0539">Nucleus</keyword>
<keyword id="KW-1185">Reference proteome</keyword>
<feature type="chain" id="PRO_0000294430" description="RBPJ-interacting and tubulin-associated protein 1">
    <location>
        <begin position="1"/>
        <end position="253"/>
    </location>
</feature>
<feature type="region of interest" description="Disordered" evidence="2">
    <location>
        <begin position="30"/>
        <end position="89"/>
    </location>
</feature>
<feature type="region of interest" description="Interaction with RBPJ/RBPSUH" evidence="1">
    <location>
        <begin position="112"/>
        <end position="140"/>
    </location>
</feature>
<feature type="region of interest" description="Disordered" evidence="2">
    <location>
        <begin position="127"/>
        <end position="175"/>
    </location>
</feature>
<feature type="region of interest" description="Interaction with tubulin" evidence="1">
    <location>
        <begin position="140"/>
        <end position="253"/>
    </location>
</feature>
<feature type="region of interest" description="Disordered" evidence="2">
    <location>
        <begin position="188"/>
        <end position="253"/>
    </location>
</feature>
<feature type="short sequence motif" description="Nuclear localization signal" evidence="1">
    <location>
        <begin position="81"/>
        <end position="97"/>
    </location>
</feature>
<feature type="compositionally biased region" description="Polar residues" evidence="2">
    <location>
        <begin position="71"/>
        <end position="81"/>
    </location>
</feature>
<feature type="compositionally biased region" description="Polar residues" evidence="2">
    <location>
        <begin position="188"/>
        <end position="228"/>
    </location>
</feature>
<dbReference type="EMBL" id="AK003581">
    <property type="protein sequence ID" value="BAB22871.1"/>
    <property type="molecule type" value="mRNA"/>
</dbReference>
<dbReference type="EMBL" id="BC021365">
    <property type="protein sequence ID" value="AAH21365.1"/>
    <property type="molecule type" value="mRNA"/>
</dbReference>
<dbReference type="CCDS" id="CCDS51635.1"/>
<dbReference type="RefSeq" id="NP_083372.1">
    <property type="nucleotide sequence ID" value="NM_029096.3"/>
</dbReference>
<dbReference type="RefSeq" id="NP_598669.1">
    <property type="nucleotide sequence ID" value="NM_133908.1"/>
</dbReference>
<dbReference type="FunCoup" id="Q9D1H0">
    <property type="interactions" value="824"/>
</dbReference>
<dbReference type="STRING" id="10090.ENSMUSP00000136946"/>
<dbReference type="GlyGen" id="Q9D1H0">
    <property type="glycosylation" value="1 site, 1 N-linked glycan (1 site)"/>
</dbReference>
<dbReference type="iPTMnet" id="Q9D1H0"/>
<dbReference type="PhosphoSitePlus" id="Q9D1H0"/>
<dbReference type="PaxDb" id="10090-ENSMUSP00000031599"/>
<dbReference type="ProteomicsDB" id="253325"/>
<dbReference type="Antibodypedia" id="51448">
    <property type="antibodies" value="86 antibodies from 14 providers"/>
</dbReference>
<dbReference type="Ensembl" id="ENSMUST00000031599.9">
    <property type="protein sequence ID" value="ENSMUSP00000031599.3"/>
    <property type="gene ID" value="ENSMUSG00000029600.11"/>
</dbReference>
<dbReference type="Ensembl" id="ENSMUST00000177800.8">
    <property type="protein sequence ID" value="ENSMUSP00000136946.2"/>
    <property type="gene ID" value="ENSMUSG00000029600.11"/>
</dbReference>
<dbReference type="GeneID" id="100764"/>
<dbReference type="KEGG" id="mmu:100764"/>
<dbReference type="UCSC" id="uc008zhp.2">
    <property type="organism name" value="mouse"/>
</dbReference>
<dbReference type="AGR" id="MGI:1922021"/>
<dbReference type="CTD" id="84934"/>
<dbReference type="MGI" id="MGI:1922021">
    <property type="gene designation" value="Rita1"/>
</dbReference>
<dbReference type="VEuPathDB" id="HostDB:ENSMUSG00000029600"/>
<dbReference type="eggNOG" id="ENOG502S61Y">
    <property type="taxonomic scope" value="Eukaryota"/>
</dbReference>
<dbReference type="GeneTree" id="ENSGT00390000013005"/>
<dbReference type="HOGENOM" id="CLU_062251_0_0_1"/>
<dbReference type="InParanoid" id="Q9D1H0"/>
<dbReference type="OMA" id="WEGPWMA"/>
<dbReference type="OrthoDB" id="10061257at2759"/>
<dbReference type="PhylomeDB" id="Q9D1H0"/>
<dbReference type="TreeFam" id="TF337291"/>
<dbReference type="BioGRID-ORCS" id="100764">
    <property type="hits" value="3 hits in 76 CRISPR screens"/>
</dbReference>
<dbReference type="PRO" id="PR:Q9D1H0"/>
<dbReference type="Proteomes" id="UP000000589">
    <property type="component" value="Chromosome 5"/>
</dbReference>
<dbReference type="RNAct" id="Q9D1H0">
    <property type="molecule type" value="protein"/>
</dbReference>
<dbReference type="Bgee" id="ENSMUSG00000029600">
    <property type="expression patterns" value="Expressed in embryonic brain and 208 other cell types or tissues"/>
</dbReference>
<dbReference type="ExpressionAtlas" id="Q9D1H0">
    <property type="expression patterns" value="baseline and differential"/>
</dbReference>
<dbReference type="GO" id="GO:0005813">
    <property type="term" value="C:centrosome"/>
    <property type="evidence" value="ECO:0000250"/>
    <property type="project" value="UniProtKB"/>
</dbReference>
<dbReference type="GO" id="GO:0005737">
    <property type="term" value="C:cytoplasm"/>
    <property type="evidence" value="ECO:0000250"/>
    <property type="project" value="UniProtKB"/>
</dbReference>
<dbReference type="GO" id="GO:0005654">
    <property type="term" value="C:nucleoplasm"/>
    <property type="evidence" value="ECO:0007669"/>
    <property type="project" value="Ensembl"/>
</dbReference>
<dbReference type="GO" id="GO:0005634">
    <property type="term" value="C:nucleus"/>
    <property type="evidence" value="ECO:0000250"/>
    <property type="project" value="UniProtKB"/>
</dbReference>
<dbReference type="GO" id="GO:0015631">
    <property type="term" value="F:tubulin binding"/>
    <property type="evidence" value="ECO:0000250"/>
    <property type="project" value="UniProtKB"/>
</dbReference>
<dbReference type="GO" id="GO:0045746">
    <property type="term" value="P:negative regulation of Notch signaling pathway"/>
    <property type="evidence" value="ECO:0000250"/>
    <property type="project" value="UniProtKB"/>
</dbReference>
<dbReference type="GO" id="GO:0022008">
    <property type="term" value="P:neurogenesis"/>
    <property type="evidence" value="ECO:0000250"/>
    <property type="project" value="UniProtKB"/>
</dbReference>
<dbReference type="GO" id="GO:0007219">
    <property type="term" value="P:Notch signaling pathway"/>
    <property type="evidence" value="ECO:0007669"/>
    <property type="project" value="UniProtKB-KW"/>
</dbReference>
<dbReference type="GO" id="GO:0051168">
    <property type="term" value="P:nuclear export"/>
    <property type="evidence" value="ECO:0007669"/>
    <property type="project" value="Ensembl"/>
</dbReference>
<dbReference type="InterPro" id="IPR031418">
    <property type="entry name" value="RITA1"/>
</dbReference>
<dbReference type="PANTHER" id="PTHR34917">
    <property type="entry name" value="RBPJ-INTERACTING AND TUBULIN-ASSOCIATED PROTEIN 1"/>
    <property type="match status" value="1"/>
</dbReference>
<dbReference type="PANTHER" id="PTHR34917:SF1">
    <property type="entry name" value="RBPJ-INTERACTING AND TUBULIN-ASSOCIATED PROTEIN 1"/>
    <property type="match status" value="1"/>
</dbReference>
<dbReference type="Pfam" id="PF17066">
    <property type="entry name" value="RITA"/>
    <property type="match status" value="1"/>
</dbReference>
<sequence>MKALHLQHRSPTSYRVKARASYVDETLFGSPARTRPAQPDFDPPWVQNCNRSRGVGPGPPKGSLAKRDCESPSSRGSTPNLTPRKKNKYRLIGHAPSYCDESLFGTSKEGSRMAVGDAAKLRTLFWTPPATPRGSHTPCPRETPLRAIHPAGPSRTEPRVTAGSQMSSQDGLCVPCSLGQRRSHSLTHLTVPSTGHPASSAPQTNGPWSPRPNTSGATVQSPLVTSKACSGRVSGPAPPRRGACPPKPKPPWK</sequence>
<organism>
    <name type="scientific">Mus musculus</name>
    <name type="common">Mouse</name>
    <dbReference type="NCBI Taxonomy" id="10090"/>
    <lineage>
        <taxon>Eukaryota</taxon>
        <taxon>Metazoa</taxon>
        <taxon>Chordata</taxon>
        <taxon>Craniata</taxon>
        <taxon>Vertebrata</taxon>
        <taxon>Euteleostomi</taxon>
        <taxon>Mammalia</taxon>
        <taxon>Eutheria</taxon>
        <taxon>Euarchontoglires</taxon>
        <taxon>Glires</taxon>
        <taxon>Rodentia</taxon>
        <taxon>Myomorpha</taxon>
        <taxon>Muroidea</taxon>
        <taxon>Muridae</taxon>
        <taxon>Murinae</taxon>
        <taxon>Mus</taxon>
        <taxon>Mus</taxon>
    </lineage>
</organism>
<evidence type="ECO:0000250" key="1"/>
<evidence type="ECO:0000256" key="2">
    <source>
        <dbReference type="SAM" id="MobiDB-lite"/>
    </source>
</evidence>
<evidence type="ECO:0000305" key="3"/>
<name>RITA1_MOUSE</name>
<protein>
    <recommendedName>
        <fullName>RBPJ-interacting and tubulin-associated protein 1</fullName>
    </recommendedName>
    <alternativeName>
        <fullName>RBPJ-interacting and tubulin-associated protein</fullName>
    </alternativeName>
</protein>
<gene>
    <name type="primary">Rita1</name>
    <name type="synonym">Rita</name>
</gene>
<accession>Q9D1H0</accession>